<sequence>MLKRLDKIRFRGQKRDDFLDLVESPNASDTECGDEIPMKIPPTSLKDTEELKDPAGSGTIIMASGVAEYNRTESDRLNEVKGHLEIALLEKHFLQEELRKLREETNIDTLKQELEKERQRRTELEQKITDIAKTRTDESATQQLSKGPSQTNGADKQRSKTMCYRVQKWFYDKFGEYIEDFRFQPEECTVETEEPLSARRLTENMRRLKRGAKPVTNFVKNLSALSDWHSVYTSAIAFIIYMNAVWHGWAIPMFLFLAILRLSLNYLIARGWRIQWSIVPQVSETLELPKEDLTVSEKFQLVLDVAQKAQNLFGKMADILEKIKNLFMWVQPEMTQKLYIGLWAAFVASCFFHYKTIGLCMGLYAGIKFFLIDFIFKRCPRLRAKYDTPYIIWTSLPTDPQLKERTNATSSRRIQTVYSRGNLASSAPQGVSRDEETGRFHSTKKSSFHEIFSLLETERPLPACETGWRCCLINRDRKMPTDYIRNGILYVTENFLCFESSRSGSSKRNKVIKLTDITDIQKYKVLSVLPGSGMGIAVSTPSTQKPLVFGAMVHRDEAFETIFSQYVKITSAVTNSDT</sequence>
<organism>
    <name type="scientific">Xenopus laevis</name>
    <name type="common">African clawed frog</name>
    <dbReference type="NCBI Taxonomy" id="8355"/>
    <lineage>
        <taxon>Eukaryota</taxon>
        <taxon>Metazoa</taxon>
        <taxon>Chordata</taxon>
        <taxon>Craniata</taxon>
        <taxon>Vertebrata</taxon>
        <taxon>Euteleostomi</taxon>
        <taxon>Amphibia</taxon>
        <taxon>Batrachia</taxon>
        <taxon>Anura</taxon>
        <taxon>Pipoidea</taxon>
        <taxon>Pipidae</taxon>
        <taxon>Xenopodinae</taxon>
        <taxon>Xenopus</taxon>
        <taxon>Xenopus</taxon>
    </lineage>
</organism>
<proteinExistence type="evidence at transcript level"/>
<comment type="function">
    <text evidence="1">Plays a role as a mediator of e2f1-induced apoptosis in the absence of p53/TP53.</text>
</comment>
<comment type="subcellular location">
    <subcellularLocation>
        <location evidence="1">Mitochondrion membrane</location>
        <topology evidence="3">Multi-pass membrane protein</topology>
    </subcellularLocation>
    <subcellularLocation>
        <location evidence="2">Endoplasmic reticulum membrane</location>
        <topology evidence="3">Multi-pass membrane protein</topology>
    </subcellularLocation>
</comment>
<accession>A2RV80</accession>
<name>GRAM4_XENLA</name>
<dbReference type="EMBL" id="BC133216">
    <property type="protein sequence ID" value="AAI33217.1"/>
    <property type="molecule type" value="mRNA"/>
</dbReference>
<dbReference type="RefSeq" id="NP_001091321.1">
    <property type="nucleotide sequence ID" value="NM_001097852.1"/>
</dbReference>
<dbReference type="SMR" id="A2RV80"/>
<dbReference type="GeneID" id="100037148"/>
<dbReference type="KEGG" id="xla:100037148"/>
<dbReference type="AGR" id="Xenbase:XB-GENE-999029"/>
<dbReference type="CTD" id="100037148"/>
<dbReference type="OrthoDB" id="1708389at2759"/>
<dbReference type="Proteomes" id="UP000186698">
    <property type="component" value="Chromosome 3S"/>
</dbReference>
<dbReference type="Bgee" id="100037148">
    <property type="expression patterns" value="Expressed in blastula and 19 other cell types or tissues"/>
</dbReference>
<dbReference type="GO" id="GO:0005789">
    <property type="term" value="C:endoplasmic reticulum membrane"/>
    <property type="evidence" value="ECO:0007669"/>
    <property type="project" value="UniProtKB-SubCell"/>
</dbReference>
<dbReference type="GO" id="GO:0031966">
    <property type="term" value="C:mitochondrial membrane"/>
    <property type="evidence" value="ECO:0007669"/>
    <property type="project" value="UniProtKB-SubCell"/>
</dbReference>
<dbReference type="GO" id="GO:0006915">
    <property type="term" value="P:apoptotic process"/>
    <property type="evidence" value="ECO:0007669"/>
    <property type="project" value="UniProtKB-KW"/>
</dbReference>
<dbReference type="GO" id="GO:0034164">
    <property type="term" value="P:negative regulation of toll-like receptor 9 signaling pathway"/>
    <property type="evidence" value="ECO:0000318"/>
    <property type="project" value="GO_Central"/>
</dbReference>
<dbReference type="CDD" id="cd13221">
    <property type="entry name" value="PH-GRAM_GRAMDC4"/>
    <property type="match status" value="1"/>
</dbReference>
<dbReference type="Gene3D" id="2.30.29.30">
    <property type="entry name" value="Pleckstrin-homology domain (PH domain)/Phosphotyrosine-binding domain (PTB)"/>
    <property type="match status" value="1"/>
</dbReference>
<dbReference type="InterPro" id="IPR004182">
    <property type="entry name" value="GRAM"/>
</dbReference>
<dbReference type="InterPro" id="IPR037847">
    <property type="entry name" value="GRAMDC4"/>
</dbReference>
<dbReference type="InterPro" id="IPR037845">
    <property type="entry name" value="GRAMDC4_PH-GRAM"/>
</dbReference>
<dbReference type="InterPro" id="IPR011993">
    <property type="entry name" value="PH-like_dom_sf"/>
</dbReference>
<dbReference type="PANTHER" id="PTHR37402">
    <property type="entry name" value="GRAM DOMAIN-CONTAINING PROTEIN 4"/>
    <property type="match status" value="1"/>
</dbReference>
<dbReference type="PANTHER" id="PTHR37402:SF1">
    <property type="entry name" value="GRAM DOMAIN-CONTAINING PROTEIN 4"/>
    <property type="match status" value="1"/>
</dbReference>
<dbReference type="Pfam" id="PF02893">
    <property type="entry name" value="GRAM"/>
    <property type="match status" value="1"/>
</dbReference>
<dbReference type="SMART" id="SM00568">
    <property type="entry name" value="GRAM"/>
    <property type="match status" value="1"/>
</dbReference>
<feature type="chain" id="PRO_0000328744" description="GRAM domain-containing protein 4">
    <location>
        <begin position="1"/>
        <end position="578"/>
    </location>
</feature>
<feature type="transmembrane region" description="Helical" evidence="3">
    <location>
        <begin position="236"/>
        <end position="256"/>
    </location>
</feature>
<feature type="transmembrane region" description="Helical" evidence="3">
    <location>
        <begin position="334"/>
        <end position="354"/>
    </location>
</feature>
<feature type="transmembrane region" description="Helical" evidence="3">
    <location>
        <begin position="356"/>
        <end position="376"/>
    </location>
</feature>
<feature type="domain" description="GRAM">
    <location>
        <begin position="446"/>
        <end position="524"/>
    </location>
</feature>
<feature type="region of interest" description="Disordered" evidence="4">
    <location>
        <begin position="132"/>
        <end position="157"/>
    </location>
</feature>
<feature type="coiled-coil region" evidence="3">
    <location>
        <begin position="83"/>
        <end position="135"/>
    </location>
</feature>
<feature type="compositionally biased region" description="Polar residues" evidence="4">
    <location>
        <begin position="139"/>
        <end position="154"/>
    </location>
</feature>
<evidence type="ECO:0000250" key="1">
    <source>
        <dbReference type="UniProtKB" id="Q6IC98"/>
    </source>
</evidence>
<evidence type="ECO:0000250" key="2">
    <source>
        <dbReference type="UniProtKB" id="Q8CB44"/>
    </source>
</evidence>
<evidence type="ECO:0000255" key="3"/>
<evidence type="ECO:0000256" key="4">
    <source>
        <dbReference type="SAM" id="MobiDB-lite"/>
    </source>
</evidence>
<keyword id="KW-0053">Apoptosis</keyword>
<keyword id="KW-0175">Coiled coil</keyword>
<keyword id="KW-0256">Endoplasmic reticulum</keyword>
<keyword id="KW-0472">Membrane</keyword>
<keyword id="KW-0496">Mitochondrion</keyword>
<keyword id="KW-1185">Reference proteome</keyword>
<keyword id="KW-0812">Transmembrane</keyword>
<keyword id="KW-1133">Transmembrane helix</keyword>
<protein>
    <recommendedName>
        <fullName>GRAM domain-containing protein 4</fullName>
    </recommendedName>
</protein>
<reference key="1">
    <citation type="submission" date="2007-02" db="EMBL/GenBank/DDBJ databases">
        <authorList>
            <consortium name="NIH - Xenopus Gene Collection (XGC) project"/>
        </authorList>
    </citation>
    <scope>NUCLEOTIDE SEQUENCE [LARGE SCALE MRNA]</scope>
    <source>
        <tissue>Eye</tissue>
    </source>
</reference>
<gene>
    <name type="primary">gramd4</name>
</gene>